<proteinExistence type="evidence at protein level"/>
<accession>Q8K358</accession>
<accession>Q921E1</accession>
<sequence length="434" mass="49804">MAAPLALVLVVAVTVRAALFRSSLAEFISERVEVVSPLSSWKRVVEGLALLDLGVSPYSGAVFHETPLIIYLFHFLIDYAELVFMITDALTAIALYFAIQDFNKVVFKKQKLLLELDQYAPDVAELIRTPMEMRYIPLKVALYLLNPYTILSCVAKSTCAINNTLIAFFILTTIKGSVFLSAVFLALATYQSLYPVTLFAPGLLYLLQRQYIPVKVKSKAFWIFSWEYAMMYTGSLVVIVCLSFFLLSSWDFIPAVYGFILSVPDLTPNIGLFWYFFAEMFEHFSLFFVCVFQINVFFYTVPLAIKLKEHPIFFMFIQIAIISIFKSYPTVGDVALYMAFFPVWNHLYRFLRNIFVLTCIIIVCSLLFPVLWHLWIYAGSANSNFFYAITLTFNVGQILLISDYFYAFLRREYYLTHGLYLTAKDGTEAMLVLK</sequence>
<protein>
    <recommendedName>
        <fullName evidence="2">GPI-anchor transamidase component PIGU</fullName>
    </recommendedName>
    <alternativeName>
        <fullName>Cell division cycle protein 91-like 1</fullName>
        <shortName>Protein CDC91-like 1</shortName>
    </alternativeName>
    <alternativeName>
        <fullName>GPI transamidase component PIG-U</fullName>
    </alternativeName>
    <alternativeName>
        <fullName>Phosphatidylinositol glycan anchor biosynthesis class U protein</fullName>
    </alternativeName>
</protein>
<reference key="1">
    <citation type="journal article" date="2009" name="PLoS Biol.">
        <title>Lineage-specific biology revealed by a finished genome assembly of the mouse.</title>
        <authorList>
            <person name="Church D.M."/>
            <person name="Goodstadt L."/>
            <person name="Hillier L.W."/>
            <person name="Zody M.C."/>
            <person name="Goldstein S."/>
            <person name="She X."/>
            <person name="Bult C.J."/>
            <person name="Agarwala R."/>
            <person name="Cherry J.L."/>
            <person name="DiCuccio M."/>
            <person name="Hlavina W."/>
            <person name="Kapustin Y."/>
            <person name="Meric P."/>
            <person name="Maglott D."/>
            <person name="Birtle Z."/>
            <person name="Marques A.C."/>
            <person name="Graves T."/>
            <person name="Zhou S."/>
            <person name="Teague B."/>
            <person name="Potamousis K."/>
            <person name="Churas C."/>
            <person name="Place M."/>
            <person name="Herschleb J."/>
            <person name="Runnheim R."/>
            <person name="Forrest D."/>
            <person name="Amos-Landgraf J."/>
            <person name="Schwartz D.C."/>
            <person name="Cheng Z."/>
            <person name="Lindblad-Toh K."/>
            <person name="Eichler E.E."/>
            <person name="Ponting C.P."/>
        </authorList>
    </citation>
    <scope>NUCLEOTIDE SEQUENCE [LARGE SCALE GENOMIC DNA]</scope>
    <source>
        <strain>C57BL/6J</strain>
    </source>
</reference>
<reference key="2">
    <citation type="journal article" date="2004" name="Genome Res.">
        <title>The status, quality, and expansion of the NIH full-length cDNA project: the Mammalian Gene Collection (MGC).</title>
        <authorList>
            <consortium name="The MGC Project Team"/>
        </authorList>
    </citation>
    <scope>NUCLEOTIDE SEQUENCE [LARGE SCALE MRNA] OF 284-434</scope>
    <source>
        <tissue>Mammary cancer</tissue>
    </source>
</reference>
<reference key="3">
    <citation type="journal article" date="2010" name="Cell">
        <title>A tissue-specific atlas of mouse protein phosphorylation and expression.</title>
        <authorList>
            <person name="Huttlin E.L."/>
            <person name="Jedrychowski M.P."/>
            <person name="Elias J.E."/>
            <person name="Goswami T."/>
            <person name="Rad R."/>
            <person name="Beausoleil S.A."/>
            <person name="Villen J."/>
            <person name="Haas W."/>
            <person name="Sowa M.E."/>
            <person name="Gygi S.P."/>
        </authorList>
    </citation>
    <scope>IDENTIFICATION BY MASS SPECTROMETRY [LARGE SCALE ANALYSIS]</scope>
    <source>
        <tissue>Spleen</tissue>
        <tissue>Testis</tissue>
    </source>
</reference>
<dbReference type="EMBL" id="AL845325">
    <property type="status" value="NOT_ANNOTATED_CDS"/>
    <property type="molecule type" value="Genomic_DNA"/>
</dbReference>
<dbReference type="EMBL" id="AL929588">
    <property type="status" value="NOT_ANNOTATED_CDS"/>
    <property type="molecule type" value="Genomic_DNA"/>
</dbReference>
<dbReference type="EMBL" id="BC028278">
    <property type="protein sequence ID" value="AAH28278.1"/>
    <property type="status" value="ALT_INIT"/>
    <property type="molecule type" value="mRNA"/>
</dbReference>
<dbReference type="SMR" id="Q8K358"/>
<dbReference type="FunCoup" id="Q8K358">
    <property type="interactions" value="1616"/>
</dbReference>
<dbReference type="STRING" id="10090.ENSMUSP00000076816"/>
<dbReference type="GlyGen" id="Q8K358">
    <property type="glycosylation" value="1 site"/>
</dbReference>
<dbReference type="iPTMnet" id="Q8K358"/>
<dbReference type="PhosphoSitePlus" id="Q8K358"/>
<dbReference type="PaxDb" id="10090-ENSMUSP00000076816"/>
<dbReference type="ProteomicsDB" id="288159"/>
<dbReference type="Pumba" id="Q8K358"/>
<dbReference type="Antibodypedia" id="60375">
    <property type="antibodies" value="33 antibodies from 12 providers"/>
</dbReference>
<dbReference type="Ensembl" id="ENSMUST00000165234.2">
    <property type="protein sequence ID" value="ENSMUSP00000126236.2"/>
    <property type="gene ID" value="ENSMUSG00000038383.17"/>
</dbReference>
<dbReference type="AGR" id="MGI:3039607"/>
<dbReference type="MGI" id="MGI:3039607">
    <property type="gene designation" value="Pigu"/>
</dbReference>
<dbReference type="VEuPathDB" id="HostDB:ENSMUSG00000038383"/>
<dbReference type="eggNOG" id="KOG2552">
    <property type="taxonomic scope" value="Eukaryota"/>
</dbReference>
<dbReference type="GeneTree" id="ENSGT00390000014941"/>
<dbReference type="InParanoid" id="Q8K358"/>
<dbReference type="Reactome" id="R-MMU-162791">
    <property type="pathway name" value="Attachment of GPI anchor to uPAR"/>
</dbReference>
<dbReference type="UniPathway" id="UPA00196"/>
<dbReference type="ChiTaRS" id="Pigu">
    <property type="organism name" value="mouse"/>
</dbReference>
<dbReference type="PRO" id="PR:Q8K358"/>
<dbReference type="Proteomes" id="UP000000589">
    <property type="component" value="Chromosome 2"/>
</dbReference>
<dbReference type="RNAct" id="Q8K358">
    <property type="molecule type" value="protein"/>
</dbReference>
<dbReference type="Bgee" id="ENSMUSG00000038383">
    <property type="expression patterns" value="Expressed in external carotid artery and 259 other cell types or tissues"/>
</dbReference>
<dbReference type="ExpressionAtlas" id="Q8K358">
    <property type="expression patterns" value="baseline and differential"/>
</dbReference>
<dbReference type="GO" id="GO:0042765">
    <property type="term" value="C:GPI-anchor transamidase complex"/>
    <property type="evidence" value="ECO:0000250"/>
    <property type="project" value="UniProtKB"/>
</dbReference>
<dbReference type="GO" id="GO:0016255">
    <property type="term" value="P:attachment of GPI anchor to protein"/>
    <property type="evidence" value="ECO:0000250"/>
    <property type="project" value="UniProtKB"/>
</dbReference>
<dbReference type="GO" id="GO:0006506">
    <property type="term" value="P:GPI anchor biosynthetic process"/>
    <property type="evidence" value="ECO:0007669"/>
    <property type="project" value="UniProtKB-UniPathway"/>
</dbReference>
<dbReference type="InterPro" id="IPR009600">
    <property type="entry name" value="PIG-U"/>
</dbReference>
<dbReference type="PANTHER" id="PTHR13121">
    <property type="entry name" value="GPI TRANSAMIDASE COMPONENT PIG-U"/>
    <property type="match status" value="1"/>
</dbReference>
<dbReference type="PANTHER" id="PTHR13121:SF0">
    <property type="entry name" value="PHOSPHATIDYLINOSITOL GLYCAN ANCHOR BIOSYNTHESIS CLASS U PROTEIN"/>
    <property type="match status" value="1"/>
</dbReference>
<dbReference type="Pfam" id="PF06728">
    <property type="entry name" value="PIG-U"/>
    <property type="match status" value="1"/>
</dbReference>
<name>PIGU_MOUSE</name>
<evidence type="ECO:0000250" key="1">
    <source>
        <dbReference type="UniProtKB" id="Q9H490"/>
    </source>
</evidence>
<evidence type="ECO:0000305" key="2"/>
<evidence type="ECO:0000312" key="3">
    <source>
        <dbReference type="MGI" id="MGI:3039607"/>
    </source>
</evidence>
<feature type="chain" id="PRO_0000121395" description="GPI-anchor transamidase component PIGU">
    <location>
        <begin position="1"/>
        <end position="434"/>
    </location>
</feature>
<feature type="topological domain" description="Cytoplasmic" evidence="1">
    <location>
        <begin position="1"/>
        <end position="3"/>
    </location>
</feature>
<feature type="transmembrane region" description="Helical" evidence="1">
    <location>
        <begin position="4"/>
        <end position="22"/>
    </location>
</feature>
<feature type="topological domain" description="Lumenal" evidence="1">
    <location>
        <begin position="23"/>
        <end position="78"/>
    </location>
</feature>
<feature type="transmembrane region" description="Helical" evidence="1">
    <location>
        <begin position="79"/>
        <end position="99"/>
    </location>
</feature>
<feature type="topological domain" description="Cytoplasmic" evidence="1">
    <location>
        <begin position="100"/>
        <end position="136"/>
    </location>
</feature>
<feature type="transmembrane region" description="Helical" evidence="1">
    <location>
        <begin position="137"/>
        <end position="157"/>
    </location>
</feature>
<feature type="transmembrane region" description="Helical" evidence="1">
    <location>
        <begin position="158"/>
        <end position="177"/>
    </location>
</feature>
<feature type="transmembrane region" description="Helical" evidence="1">
    <location>
        <begin position="178"/>
        <end position="193"/>
    </location>
</feature>
<feature type="transmembrane region" description="Helical" evidence="1">
    <location>
        <begin position="194"/>
        <end position="204"/>
    </location>
</feature>
<feature type="topological domain" description="Cytoplasmic" evidence="1">
    <location>
        <begin position="205"/>
        <end position="221"/>
    </location>
</feature>
<feature type="transmembrane region" description="Helical" evidence="1">
    <location>
        <begin position="222"/>
        <end position="243"/>
    </location>
</feature>
<feature type="topological domain" description="Lumenal" evidence="1">
    <location>
        <begin position="244"/>
        <end position="285"/>
    </location>
</feature>
<feature type="transmembrane region" description="Helical" evidence="1">
    <location>
        <begin position="286"/>
        <end position="305"/>
    </location>
</feature>
<feature type="topological domain" description="Cytoplasmic" evidence="1">
    <location>
        <begin position="306"/>
        <end position="310"/>
    </location>
</feature>
<feature type="transmembrane region" description="Helical" evidence="1">
    <location>
        <begin position="311"/>
        <end position="330"/>
    </location>
</feature>
<feature type="transmembrane region" description="Helical" evidence="1">
    <location>
        <begin position="331"/>
        <end position="344"/>
    </location>
</feature>
<feature type="topological domain" description="Cytoplasmic" evidence="1">
    <location>
        <begin position="345"/>
        <end position="353"/>
    </location>
</feature>
<feature type="transmembrane region" description="Helical" evidence="1">
    <location>
        <begin position="354"/>
        <end position="371"/>
    </location>
</feature>
<feature type="topological domain" description="Lumenal" evidence="1">
    <location>
        <begin position="372"/>
        <end position="383"/>
    </location>
</feature>
<feature type="transmembrane region" description="Helical" evidence="1">
    <location>
        <begin position="384"/>
        <end position="405"/>
    </location>
</feature>
<feature type="topological domain" description="Cytoplasmic" evidence="1">
    <location>
        <begin position="406"/>
        <end position="434"/>
    </location>
</feature>
<feature type="binding site" evidence="1">
    <location>
        <position position="215"/>
    </location>
    <ligand>
        <name>a cardiolipin</name>
        <dbReference type="ChEBI" id="CHEBI:62237"/>
    </ligand>
</feature>
<feature type="binding site" evidence="1">
    <location>
        <position position="308"/>
    </location>
    <ligand>
        <name>a cardiolipin</name>
        <dbReference type="ChEBI" id="CHEBI:62237"/>
    </ligand>
</feature>
<feature type="binding site" evidence="1">
    <location>
        <position position="382"/>
    </location>
    <ligand>
        <name>a 2-acyl-6-[6-phosphoethanolamine-alpha-D-mannosyl-(1-&gt;2)-6-phosphoethanolamine-alpha-D-mannosyl-(1-&gt;6)-2-phosphoethanolamine-alpha-D-mannosyl-(1-&gt;4)-alpha-D-glucosaminyl]-1-(1-radyl,2-acyl-sn-glycero-3-phospho)-1D-myo-inositol</name>
        <dbReference type="ChEBI" id="CHEBI:144080"/>
    </ligand>
</feature>
<feature type="binding site" evidence="1">
    <location>
        <position position="384"/>
    </location>
    <ligand>
        <name>a 2-acyl-6-[6-phosphoethanolamine-alpha-D-mannosyl-(1-&gt;2)-6-phosphoethanolamine-alpha-D-mannosyl-(1-&gt;6)-2-phosphoethanolamine-alpha-D-mannosyl-(1-&gt;4)-alpha-D-glucosaminyl]-1-(1-radyl,2-acyl-sn-glycero-3-phospho)-1D-myo-inositol</name>
        <dbReference type="ChEBI" id="CHEBI:144080"/>
    </ligand>
</feature>
<organism>
    <name type="scientific">Mus musculus</name>
    <name type="common">Mouse</name>
    <dbReference type="NCBI Taxonomy" id="10090"/>
    <lineage>
        <taxon>Eukaryota</taxon>
        <taxon>Metazoa</taxon>
        <taxon>Chordata</taxon>
        <taxon>Craniata</taxon>
        <taxon>Vertebrata</taxon>
        <taxon>Euteleostomi</taxon>
        <taxon>Mammalia</taxon>
        <taxon>Eutheria</taxon>
        <taxon>Euarchontoglires</taxon>
        <taxon>Glires</taxon>
        <taxon>Rodentia</taxon>
        <taxon>Myomorpha</taxon>
        <taxon>Muroidea</taxon>
        <taxon>Muridae</taxon>
        <taxon>Murinae</taxon>
        <taxon>Mus</taxon>
        <taxon>Mus</taxon>
    </lineage>
</organism>
<keyword id="KW-0256">Endoplasmic reticulum</keyword>
<keyword id="KW-0337">GPI-anchor biosynthesis</keyword>
<keyword id="KW-0472">Membrane</keyword>
<keyword id="KW-1185">Reference proteome</keyword>
<keyword id="KW-0812">Transmembrane</keyword>
<keyword id="KW-1133">Transmembrane helix</keyword>
<comment type="function">
    <text evidence="1">Component of the glycosylphosphatidylinositol-anchor (GPI-anchor) transamidase (GPI-T) complex that catalyzes the formation of the linkage between a proprotein and a GPI-anchor and participates in GPI anchored protein biosynthesis. Binds the lipid portion of GPI-anchor. May act as an organizer in the transmembrane layer to recruit other subunits, and thus is essential for assembly of the complex.</text>
</comment>
<comment type="pathway">
    <text evidence="1">Glycolipid biosynthesis; glycosylphosphatidylinositol-anchor biosynthesis.</text>
</comment>
<comment type="subunit">
    <text evidence="1">Heteropentamer. Part of the GPI-anchor transamidase complex, consisting of PIGK, PIGT, PIGS, PIGU and GAA1.</text>
</comment>
<comment type="subcellular location">
    <subcellularLocation>
        <location evidence="1">Endoplasmic reticulum membrane</location>
        <topology evidence="1">Multi-pass membrane protein</topology>
    </subcellularLocation>
</comment>
<comment type="similarity">
    <text evidence="2">Belongs to the PIGU family.</text>
</comment>
<comment type="sequence caution" evidence="2">
    <conflict type="erroneous initiation">
        <sequence resource="EMBL-CDS" id="AAH28278"/>
    </conflict>
    <text>Extended N-terminus.</text>
</comment>
<gene>
    <name evidence="3" type="primary">Pigu</name>
    <name type="synonym">Cdc91l1</name>
</gene>